<protein>
    <recommendedName>
        <fullName evidence="19">All-trans-retinol dehydrogenase [NAD(+)] ADH1B</fullName>
        <ecNumber evidence="5">1.1.1.105</ecNumber>
    </recommendedName>
    <alternativeName>
        <fullName>Alcohol dehydrogenase 1B</fullName>
    </alternativeName>
    <alternativeName>
        <fullName>Alcohol dehydrogenase subunit beta</fullName>
    </alternativeName>
</protein>
<sequence length="375" mass="39835">MSTAGKVIKCKAAVLWEVKKPFSIEDVEVAPPKAYEVRIKMVAVGICHTDDHVVSGNLVTPLPVILGHEAAGIVESVGEGVTTVKPGDKVIPLFTPQCGKCRVCKNPESNYCLKNDLGNPRGTLQDGTRRFTCRGKPIHHFLGTSTFSQYTVVDENAVAKIDAASPLEKVCLIGCGFSTGYGSAVNVAKVTPGSTCAVFGLGGVGLSAVMGCKAAGAARIIAVDINKDKFAKAKELGATECINPQDYKKPIQEVLKEMTDGGVDFSFEVIGRLDTMMASLLCCHEACGTSVIVGVPPASQNLSINPMLLLTGRTWKGAVYGGFKSKEGIPKLVADFMAKKFSLDALITHVLPFEKINEGFDLLHSGKSIRTVLTF</sequence>
<evidence type="ECO:0000269" key="1">
    <source>
    </source>
</evidence>
<evidence type="ECO:0000269" key="2">
    <source>
    </source>
</evidence>
<evidence type="ECO:0000269" key="3">
    <source>
    </source>
</evidence>
<evidence type="ECO:0000269" key="4">
    <source>
    </source>
</evidence>
<evidence type="ECO:0000269" key="5">
    <source>
    </source>
</evidence>
<evidence type="ECO:0000269" key="6">
    <source>
    </source>
</evidence>
<evidence type="ECO:0000269" key="7">
    <source>
    </source>
</evidence>
<evidence type="ECO:0000269" key="8">
    <source>
    </source>
</evidence>
<evidence type="ECO:0000269" key="9">
    <source>
    </source>
</evidence>
<evidence type="ECO:0000269" key="10">
    <source>
    </source>
</evidence>
<evidence type="ECO:0000269" key="11">
    <source>
    </source>
</evidence>
<evidence type="ECO:0000269" key="12">
    <source>
    </source>
</evidence>
<evidence type="ECO:0000269" key="13">
    <source>
    </source>
</evidence>
<evidence type="ECO:0000269" key="14">
    <source>
    </source>
</evidence>
<evidence type="ECO:0000269" key="15">
    <source ref="10"/>
</evidence>
<evidence type="ECO:0000269" key="16">
    <source ref="16"/>
</evidence>
<evidence type="ECO:0000269" key="17">
    <source ref="6"/>
</evidence>
<evidence type="ECO:0000303" key="18">
    <source>
    </source>
</evidence>
<evidence type="ECO:0000305" key="19"/>
<evidence type="ECO:0000305" key="20">
    <source>
    </source>
</evidence>
<evidence type="ECO:0000305" key="21">
    <source>
    </source>
</evidence>
<evidence type="ECO:0000312" key="22">
    <source>
        <dbReference type="HGNC" id="HGNC:250"/>
    </source>
</evidence>
<evidence type="ECO:0007744" key="23">
    <source>
    </source>
</evidence>
<evidence type="ECO:0007829" key="24">
    <source>
        <dbReference type="PDB" id="1HDY"/>
    </source>
</evidence>
<evidence type="ECO:0007829" key="25">
    <source>
        <dbReference type="PDB" id="1U3U"/>
    </source>
</evidence>
<dbReference type="EC" id="1.1.1.105" evidence="5"/>
<dbReference type="EMBL" id="M24317">
    <property type="protein sequence ID" value="AAA51884.1"/>
    <property type="molecule type" value="mRNA"/>
</dbReference>
<dbReference type="EMBL" id="X03350">
    <property type="protein sequence ID" value="CAA27056.1"/>
    <property type="molecule type" value="mRNA"/>
</dbReference>
<dbReference type="EMBL" id="M24316">
    <property type="protein sequence ID" value="AAB59496.1"/>
    <property type="molecule type" value="Genomic_DNA"/>
</dbReference>
<dbReference type="EMBL" id="M24308">
    <property type="protein sequence ID" value="AAB59496.1"/>
    <property type="status" value="JOINED"/>
    <property type="molecule type" value="Genomic_DNA"/>
</dbReference>
<dbReference type="EMBL" id="M24309">
    <property type="protein sequence ID" value="AAB59496.1"/>
    <property type="status" value="JOINED"/>
    <property type="molecule type" value="Genomic_DNA"/>
</dbReference>
<dbReference type="EMBL" id="M24310">
    <property type="protein sequence ID" value="AAB59496.1"/>
    <property type="status" value="JOINED"/>
    <property type="molecule type" value="Genomic_DNA"/>
</dbReference>
<dbReference type="EMBL" id="M24311">
    <property type="protein sequence ID" value="AAB59496.1"/>
    <property type="status" value="JOINED"/>
    <property type="molecule type" value="Genomic_DNA"/>
</dbReference>
<dbReference type="EMBL" id="M24312">
    <property type="protein sequence ID" value="AAB59496.1"/>
    <property type="status" value="JOINED"/>
    <property type="molecule type" value="Genomic_DNA"/>
</dbReference>
<dbReference type="EMBL" id="M24313">
    <property type="protein sequence ID" value="AAB59496.1"/>
    <property type="status" value="JOINED"/>
    <property type="molecule type" value="Genomic_DNA"/>
</dbReference>
<dbReference type="EMBL" id="M24314">
    <property type="protein sequence ID" value="AAB59496.1"/>
    <property type="status" value="JOINED"/>
    <property type="molecule type" value="Genomic_DNA"/>
</dbReference>
<dbReference type="EMBL" id="D00137">
    <property type="protein sequence ID" value="BAA00084.1"/>
    <property type="molecule type" value="mRNA"/>
</dbReference>
<dbReference type="EMBL" id="L38290">
    <property type="protein sequence ID" value="AAB48003.1"/>
    <property type="molecule type" value="Genomic_DNA"/>
</dbReference>
<dbReference type="EMBL" id="L38283">
    <property type="protein sequence ID" value="AAB48003.1"/>
    <property type="status" value="JOINED"/>
    <property type="molecule type" value="Genomic_DNA"/>
</dbReference>
<dbReference type="EMBL" id="L38284">
    <property type="protein sequence ID" value="AAB48003.1"/>
    <property type="status" value="JOINED"/>
    <property type="molecule type" value="Genomic_DNA"/>
</dbReference>
<dbReference type="EMBL" id="L38285">
    <property type="protein sequence ID" value="AAB48003.1"/>
    <property type="status" value="JOINED"/>
    <property type="molecule type" value="Genomic_DNA"/>
</dbReference>
<dbReference type="EMBL" id="L38286">
    <property type="protein sequence ID" value="AAB48003.1"/>
    <property type="status" value="JOINED"/>
    <property type="molecule type" value="Genomic_DNA"/>
</dbReference>
<dbReference type="EMBL" id="L38287">
    <property type="protein sequence ID" value="AAB48003.1"/>
    <property type="status" value="JOINED"/>
    <property type="molecule type" value="Genomic_DNA"/>
</dbReference>
<dbReference type="EMBL" id="L38288">
    <property type="protein sequence ID" value="AAB48003.1"/>
    <property type="status" value="JOINED"/>
    <property type="molecule type" value="Genomic_DNA"/>
</dbReference>
<dbReference type="EMBL" id="L38289">
    <property type="protein sequence ID" value="AAB48003.1"/>
    <property type="status" value="JOINED"/>
    <property type="molecule type" value="Genomic_DNA"/>
</dbReference>
<dbReference type="EMBL" id="X15447">
    <property type="protein sequence ID" value="CAA33487.1"/>
    <property type="molecule type" value="Genomic_DNA"/>
</dbReference>
<dbReference type="EMBL" id="X15448">
    <property type="protein sequence ID" value="CAA33487.1"/>
    <property type="status" value="JOINED"/>
    <property type="molecule type" value="Genomic_DNA"/>
</dbReference>
<dbReference type="EMBL" id="X15449">
    <property type="protein sequence ID" value="CAA33487.1"/>
    <property type="status" value="JOINED"/>
    <property type="molecule type" value="Genomic_DNA"/>
</dbReference>
<dbReference type="EMBL" id="X15450">
    <property type="protein sequence ID" value="CAA33487.1"/>
    <property type="status" value="JOINED"/>
    <property type="molecule type" value="Genomic_DNA"/>
</dbReference>
<dbReference type="EMBL" id="X15451">
    <property type="protein sequence ID" value="CAA33487.1"/>
    <property type="status" value="JOINED"/>
    <property type="molecule type" value="Genomic_DNA"/>
</dbReference>
<dbReference type="EMBL" id="X15452">
    <property type="protein sequence ID" value="CAA33487.1"/>
    <property type="status" value="JOINED"/>
    <property type="molecule type" value="Genomic_DNA"/>
</dbReference>
<dbReference type="EMBL" id="X15453">
    <property type="protein sequence ID" value="CAA33487.1"/>
    <property type="status" value="JOINED"/>
    <property type="molecule type" value="Genomic_DNA"/>
</dbReference>
<dbReference type="EMBL" id="X15454">
    <property type="protein sequence ID" value="CAA33487.1"/>
    <property type="status" value="JOINED"/>
    <property type="molecule type" value="Genomic_DNA"/>
</dbReference>
<dbReference type="EMBL" id="X15455">
    <property type="protein sequence ID" value="CAA33487.1"/>
    <property type="status" value="JOINED"/>
    <property type="molecule type" value="Genomic_DNA"/>
</dbReference>
<dbReference type="EMBL" id="AF153821">
    <property type="protein sequence ID" value="AAD37446.1"/>
    <property type="molecule type" value="mRNA"/>
</dbReference>
<dbReference type="EMBL" id="DQ017646">
    <property type="protein sequence ID" value="AAY22180.1"/>
    <property type="molecule type" value="Genomic_DNA"/>
</dbReference>
<dbReference type="EMBL" id="AK301018">
    <property type="protein sequence ID" value="BAG62635.1"/>
    <property type="molecule type" value="mRNA"/>
</dbReference>
<dbReference type="EMBL" id="AC097530">
    <property type="status" value="NOT_ANNOTATED_CDS"/>
    <property type="molecule type" value="Genomic_DNA"/>
</dbReference>
<dbReference type="EMBL" id="BC033009">
    <property type="protein sequence ID" value="AAH33009.1"/>
    <property type="molecule type" value="mRNA"/>
</dbReference>
<dbReference type="EMBL" id="M21692">
    <property type="protein sequence ID" value="AAA51592.1"/>
    <property type="molecule type" value="mRNA"/>
</dbReference>
<dbReference type="EMBL" id="AF040967">
    <property type="protein sequence ID" value="AAB96912.1"/>
    <property type="molecule type" value="Genomic_DNA"/>
</dbReference>
<dbReference type="CCDS" id="CCDS34033.1">
    <molecule id="P00325-1"/>
</dbReference>
<dbReference type="CCDS" id="CCDS68761.1">
    <molecule id="P00325-2"/>
</dbReference>
<dbReference type="PIR" id="A23607">
    <property type="entry name" value="DEHUAB"/>
</dbReference>
<dbReference type="RefSeq" id="NP_000659.2">
    <molecule id="P00325-1"/>
    <property type="nucleotide sequence ID" value="NM_000668.5"/>
</dbReference>
<dbReference type="RefSeq" id="NP_001273579.1">
    <molecule id="P00325-2"/>
    <property type="nucleotide sequence ID" value="NM_001286650.2"/>
</dbReference>
<dbReference type="PDB" id="1DEH">
    <property type="method" value="X-ray"/>
    <property type="resolution" value="2.20 A"/>
    <property type="chains" value="A/B=2-375"/>
</dbReference>
<dbReference type="PDB" id="1HDX">
    <property type="method" value="X-ray"/>
    <property type="resolution" value="2.50 A"/>
    <property type="chains" value="A/B=2-375"/>
</dbReference>
<dbReference type="PDB" id="1HDY">
    <property type="method" value="X-ray"/>
    <property type="resolution" value="2.50 A"/>
    <property type="chains" value="A/B=2-375"/>
</dbReference>
<dbReference type="PDB" id="1HDZ">
    <property type="method" value="X-ray"/>
    <property type="resolution" value="2.50 A"/>
    <property type="chains" value="A/B=2-375"/>
</dbReference>
<dbReference type="PDB" id="1HSZ">
    <property type="method" value="X-ray"/>
    <property type="resolution" value="2.20 A"/>
    <property type="chains" value="A/B=2-375"/>
</dbReference>
<dbReference type="PDB" id="1HTB">
    <property type="method" value="X-ray"/>
    <property type="resolution" value="2.40 A"/>
    <property type="chains" value="A/B=2-375"/>
</dbReference>
<dbReference type="PDB" id="1U3U">
    <property type="method" value="X-ray"/>
    <property type="resolution" value="1.60 A"/>
    <property type="chains" value="A/B=2-375"/>
</dbReference>
<dbReference type="PDB" id="1U3V">
    <property type="method" value="X-ray"/>
    <property type="resolution" value="1.65 A"/>
    <property type="chains" value="A/B=2-375"/>
</dbReference>
<dbReference type="PDB" id="3HUD">
    <property type="method" value="X-ray"/>
    <property type="resolution" value="3.20 A"/>
    <property type="chains" value="A/B=2-375"/>
</dbReference>
<dbReference type="PDBsum" id="1DEH"/>
<dbReference type="PDBsum" id="1HDX"/>
<dbReference type="PDBsum" id="1HDY"/>
<dbReference type="PDBsum" id="1HDZ"/>
<dbReference type="PDBsum" id="1HSZ"/>
<dbReference type="PDBsum" id="1HTB"/>
<dbReference type="PDBsum" id="1U3U"/>
<dbReference type="PDBsum" id="1U3V"/>
<dbReference type="PDBsum" id="3HUD"/>
<dbReference type="SMR" id="P00325"/>
<dbReference type="BioGRID" id="106637">
    <property type="interactions" value="12"/>
</dbReference>
<dbReference type="CORUM" id="P00325"/>
<dbReference type="FunCoup" id="P00325">
    <property type="interactions" value="299"/>
</dbReference>
<dbReference type="IntAct" id="P00325">
    <property type="interactions" value="12"/>
</dbReference>
<dbReference type="MINT" id="P00325"/>
<dbReference type="STRING" id="9606.ENSP00000306606"/>
<dbReference type="BindingDB" id="P00325"/>
<dbReference type="ChEMBL" id="CHEMBL3284"/>
<dbReference type="DrugBank" id="DB02721">
    <property type="generic name" value="4-Iodopyrazole"/>
</dbReference>
<dbReference type="DrugBank" id="DB03703">
    <property type="generic name" value="Cyclohexanol"/>
</dbReference>
<dbReference type="DrugBank" id="DB00898">
    <property type="generic name" value="Ethanol"/>
</dbReference>
<dbReference type="DrugBank" id="DB01213">
    <property type="generic name" value="Fomepizole"/>
</dbReference>
<dbReference type="DrugBank" id="DB09462">
    <property type="generic name" value="Glycerin"/>
</dbReference>
<dbReference type="DrugBank" id="DB02481">
    <property type="generic name" value="N-Benzylformamide"/>
</dbReference>
<dbReference type="DrugBank" id="DB04105">
    <property type="generic name" value="N-Heptylformamide"/>
</dbReference>
<dbReference type="DrugBank" id="DB00157">
    <property type="generic name" value="NADH"/>
</dbReference>
<dbReference type="DrugBank" id="DB03461">
    <property type="generic name" value="Nicotinamide adenine dinucleotide phosphate"/>
</dbReference>
<dbReference type="DrugCentral" id="P00325"/>
<dbReference type="SwissLipids" id="SLP:000001880"/>
<dbReference type="GlyGen" id="P00325">
    <property type="glycosylation" value="2 sites, 1 O-linked glycan (1 site)"/>
</dbReference>
<dbReference type="iPTMnet" id="P00325"/>
<dbReference type="PhosphoSitePlus" id="P00325"/>
<dbReference type="SwissPalm" id="P00325"/>
<dbReference type="BioMuta" id="ADH1B"/>
<dbReference type="DMDM" id="113394"/>
<dbReference type="jPOST" id="P00325"/>
<dbReference type="MassIVE" id="P00325"/>
<dbReference type="PaxDb" id="9606-ENSP00000306606"/>
<dbReference type="PeptideAtlas" id="P00325"/>
<dbReference type="ProteomicsDB" id="2413"/>
<dbReference type="ProteomicsDB" id="51228">
    <molecule id="P00325-1"/>
</dbReference>
<dbReference type="Antibodypedia" id="14861">
    <property type="antibodies" value="302 antibodies from 31 providers"/>
</dbReference>
<dbReference type="DNASU" id="125"/>
<dbReference type="Ensembl" id="ENST00000305046.13">
    <molecule id="P00325-1"/>
    <property type="protein sequence ID" value="ENSP00000306606.8"/>
    <property type="gene ID" value="ENSG00000196616.15"/>
</dbReference>
<dbReference type="Ensembl" id="ENST00000506651.5">
    <molecule id="P00325-2"/>
    <property type="protein sequence ID" value="ENSP00000425998.2"/>
    <property type="gene ID" value="ENSG00000196616.15"/>
</dbReference>
<dbReference type="Ensembl" id="ENST00000625860.2">
    <molecule id="P00325-2"/>
    <property type="protein sequence ID" value="ENSP00000486614.1"/>
    <property type="gene ID" value="ENSG00000196616.15"/>
</dbReference>
<dbReference type="GeneID" id="125"/>
<dbReference type="KEGG" id="hsa:125"/>
<dbReference type="MANE-Select" id="ENST00000305046.13">
    <property type="protein sequence ID" value="ENSP00000306606.8"/>
    <property type="RefSeq nucleotide sequence ID" value="NM_000668.6"/>
    <property type="RefSeq protein sequence ID" value="NP_000659.2"/>
</dbReference>
<dbReference type="UCSC" id="uc011cei.3">
    <molecule id="P00325-1"/>
    <property type="organism name" value="human"/>
</dbReference>
<dbReference type="AGR" id="HGNC:250"/>
<dbReference type="CTD" id="125"/>
<dbReference type="DisGeNET" id="125"/>
<dbReference type="GeneCards" id="ADH1B"/>
<dbReference type="HGNC" id="HGNC:250">
    <property type="gene designation" value="ADH1B"/>
</dbReference>
<dbReference type="HPA" id="ENSG00000196616">
    <property type="expression patterns" value="Tissue enhanced (adipose tissue, liver)"/>
</dbReference>
<dbReference type="MalaCards" id="ADH1B"/>
<dbReference type="MIM" id="103720">
    <property type="type" value="gene+phenotype"/>
</dbReference>
<dbReference type="neXtProt" id="NX_P00325"/>
<dbReference type="OpenTargets" id="ENSG00000196616"/>
<dbReference type="PharmGKB" id="PA24571"/>
<dbReference type="VEuPathDB" id="HostDB:ENSG00000196616"/>
<dbReference type="eggNOG" id="KOG0022">
    <property type="taxonomic scope" value="Eukaryota"/>
</dbReference>
<dbReference type="GeneTree" id="ENSGT00940000155234"/>
<dbReference type="HOGENOM" id="CLU_026673_14_0_1"/>
<dbReference type="InParanoid" id="P00325"/>
<dbReference type="OMA" id="GCATITG"/>
<dbReference type="OrthoDB" id="417550at2759"/>
<dbReference type="PAN-GO" id="P00325">
    <property type="GO annotations" value="7 GO annotations based on evolutionary models"/>
</dbReference>
<dbReference type="PhylomeDB" id="P00325"/>
<dbReference type="TreeFam" id="TF300429"/>
<dbReference type="BioCyc" id="MetaCyc:MONOMER66-321"/>
<dbReference type="PathwayCommons" id="P00325"/>
<dbReference type="Reactome" id="R-HSA-71384">
    <property type="pathway name" value="Ethanol oxidation"/>
</dbReference>
<dbReference type="SABIO-RK" id="P00325"/>
<dbReference type="SignaLink" id="P00325"/>
<dbReference type="BioGRID-ORCS" id="125">
    <property type="hits" value="6 hits in 1119 CRISPR screens"/>
</dbReference>
<dbReference type="ChiTaRS" id="ADH1B">
    <property type="organism name" value="human"/>
</dbReference>
<dbReference type="EvolutionaryTrace" id="P00325"/>
<dbReference type="GeneWiki" id="ADH1B"/>
<dbReference type="GenomeRNAi" id="125"/>
<dbReference type="Pharos" id="P00325">
    <property type="development level" value="Tclin"/>
</dbReference>
<dbReference type="PRO" id="PR:P00325"/>
<dbReference type="Proteomes" id="UP000005640">
    <property type="component" value="Chromosome 4"/>
</dbReference>
<dbReference type="RNAct" id="P00325">
    <property type="molecule type" value="protein"/>
</dbReference>
<dbReference type="Bgee" id="ENSG00000196616">
    <property type="expression patterns" value="Expressed in right lobe of liver and 172 other cell types or tissues"/>
</dbReference>
<dbReference type="ExpressionAtlas" id="P00325">
    <property type="expression patterns" value="baseline and differential"/>
</dbReference>
<dbReference type="GO" id="GO:0036064">
    <property type="term" value="C:ciliary basal body"/>
    <property type="evidence" value="ECO:0000314"/>
    <property type="project" value="HPA"/>
</dbReference>
<dbReference type="GO" id="GO:0005929">
    <property type="term" value="C:cilium"/>
    <property type="evidence" value="ECO:0000314"/>
    <property type="project" value="HPA"/>
</dbReference>
<dbReference type="GO" id="GO:0005829">
    <property type="term" value="C:cytosol"/>
    <property type="evidence" value="ECO:0000314"/>
    <property type="project" value="HPA"/>
</dbReference>
<dbReference type="GO" id="GO:0005654">
    <property type="term" value="C:nucleoplasm"/>
    <property type="evidence" value="ECO:0000314"/>
    <property type="project" value="HPA"/>
</dbReference>
<dbReference type="GO" id="GO:0005886">
    <property type="term" value="C:plasma membrane"/>
    <property type="evidence" value="ECO:0000314"/>
    <property type="project" value="HPA"/>
</dbReference>
<dbReference type="GO" id="GO:0004022">
    <property type="term" value="F:alcohol dehydrogenase (NAD+) activity"/>
    <property type="evidence" value="ECO:0000314"/>
    <property type="project" value="UniProtKB"/>
</dbReference>
<dbReference type="GO" id="GO:0004745">
    <property type="term" value="F:all-trans-retinol dehydrogenase (NAD+) activity"/>
    <property type="evidence" value="ECO:0000314"/>
    <property type="project" value="UniProtKB"/>
</dbReference>
<dbReference type="GO" id="GO:0008270">
    <property type="term" value="F:zinc ion binding"/>
    <property type="evidence" value="ECO:0000314"/>
    <property type="project" value="UniProtKB"/>
</dbReference>
<dbReference type="GO" id="GO:0042573">
    <property type="term" value="P:retinoic acid metabolic process"/>
    <property type="evidence" value="ECO:0000318"/>
    <property type="project" value="GO_Central"/>
</dbReference>
<dbReference type="GO" id="GO:0001523">
    <property type="term" value="P:retinoid metabolic process"/>
    <property type="evidence" value="ECO:0000314"/>
    <property type="project" value="UniProtKB"/>
</dbReference>
<dbReference type="GO" id="GO:0042572">
    <property type="term" value="P:retinol metabolic process"/>
    <property type="evidence" value="ECO:0000318"/>
    <property type="project" value="GO_Central"/>
</dbReference>
<dbReference type="CDD" id="cd08299">
    <property type="entry name" value="alcohol_DH_class_I_II_IV"/>
    <property type="match status" value="1"/>
</dbReference>
<dbReference type="FunFam" id="3.40.50.720:FF:000003">
    <property type="entry name" value="S-(hydroxymethyl)glutathione dehydrogenase"/>
    <property type="match status" value="1"/>
</dbReference>
<dbReference type="FunFam" id="3.90.180.10:FF:000001">
    <property type="entry name" value="S-(hydroxymethyl)glutathione dehydrogenase"/>
    <property type="match status" value="1"/>
</dbReference>
<dbReference type="Gene3D" id="3.90.180.10">
    <property type="entry name" value="Medium-chain alcohol dehydrogenases, catalytic domain"/>
    <property type="match status" value="1"/>
</dbReference>
<dbReference type="Gene3D" id="3.40.50.720">
    <property type="entry name" value="NAD(P)-binding Rossmann-like Domain"/>
    <property type="match status" value="1"/>
</dbReference>
<dbReference type="InterPro" id="IPR013149">
    <property type="entry name" value="ADH-like_C"/>
</dbReference>
<dbReference type="InterPro" id="IPR013154">
    <property type="entry name" value="ADH-like_N"/>
</dbReference>
<dbReference type="InterPro" id="IPR002328">
    <property type="entry name" value="ADH_Zn_CS"/>
</dbReference>
<dbReference type="InterPro" id="IPR011032">
    <property type="entry name" value="GroES-like_sf"/>
</dbReference>
<dbReference type="InterPro" id="IPR036291">
    <property type="entry name" value="NAD(P)-bd_dom_sf"/>
</dbReference>
<dbReference type="InterPro" id="IPR020843">
    <property type="entry name" value="PKS_ER"/>
</dbReference>
<dbReference type="PANTHER" id="PTHR43880">
    <property type="entry name" value="ALCOHOL DEHYDROGENASE"/>
    <property type="match status" value="1"/>
</dbReference>
<dbReference type="PANTHER" id="PTHR43880:SF11">
    <property type="entry name" value="ALL-TRANS-RETINOL DEHYDROGENASE [NAD(+)] ADH1B"/>
    <property type="match status" value="1"/>
</dbReference>
<dbReference type="Pfam" id="PF08240">
    <property type="entry name" value="ADH_N"/>
    <property type="match status" value="1"/>
</dbReference>
<dbReference type="Pfam" id="PF00107">
    <property type="entry name" value="ADH_zinc_N"/>
    <property type="match status" value="1"/>
</dbReference>
<dbReference type="SMART" id="SM00829">
    <property type="entry name" value="PKS_ER"/>
    <property type="match status" value="1"/>
</dbReference>
<dbReference type="SUPFAM" id="SSF50129">
    <property type="entry name" value="GroES-like"/>
    <property type="match status" value="2"/>
</dbReference>
<dbReference type="SUPFAM" id="SSF51735">
    <property type="entry name" value="NAD(P)-binding Rossmann-fold domains"/>
    <property type="match status" value="1"/>
</dbReference>
<dbReference type="PROSITE" id="PS00059">
    <property type="entry name" value="ADH_ZINC"/>
    <property type="match status" value="1"/>
</dbReference>
<gene>
    <name evidence="22" type="primary">ADH1B</name>
    <name type="synonym">ADH2</name>
</gene>
<reference key="1">
    <citation type="journal article" date="1985" name="Proc. Natl. Acad. Sci. U.S.A.">
        <title>Molecular cloning of a full-length cDNA for human alcohol dehydrogenase.</title>
        <authorList>
            <person name="Ikuta T."/>
            <person name="Fujiyoshi T."/>
            <person name="Kurachi K."/>
            <person name="Yoshida A."/>
        </authorList>
    </citation>
    <scope>NUCLEOTIDE SEQUENCE [MRNA] (ISOFORM 1)</scope>
    <scope>VARIANT ARG-48</scope>
</reference>
<reference key="2">
    <citation type="journal article" date="1985" name="Proc. Natl. Acad. Sci. U.S.A.">
        <authorList>
            <person name="Ikuta T."/>
            <person name="Fujiyoshi T."/>
            <person name="Kurachi K."/>
            <person name="Yoshida A."/>
        </authorList>
    </citation>
    <scope>ERRATUM OF PUBMED:2986130</scope>
</reference>
<reference key="3">
    <citation type="journal article" date="1986" name="FEBS Lett.">
        <title>cDNA clones coding for the beta-subunit of human liver alcohol dehydrogenase have differently sized 3'-non-coding regions.</title>
        <authorList>
            <person name="Heden L.-O."/>
            <person name="Hoeoeg J.-O."/>
            <person name="Larsson K."/>
            <person name="Lake M."/>
            <person name="Lagerholm E."/>
            <person name="Holmgren A."/>
            <person name="Vallee B.L."/>
            <person name="Joernvall H."/>
            <person name="von Bahr-Lindstroem H."/>
        </authorList>
    </citation>
    <scope>NUCLEOTIDE SEQUENCE [MRNA] (ISOFORM 1)</scope>
    <scope>VARIANT ARG-48</scope>
</reference>
<reference key="4">
    <citation type="journal article" date="1986" name="J. Biol. Chem.">
        <title>Molecular analysis of the human class I alcohol dehydrogenase gene family and nucleotide sequence of the gene encoding the beta subunit.</title>
        <authorList>
            <person name="Duester G."/>
            <person name="Smith M."/>
            <person name="Bilanchone V."/>
            <person name="Hatfield G.W."/>
        </authorList>
    </citation>
    <scope>NUCLEOTIDE SEQUENCE [GENOMIC DNA]</scope>
    <scope>VARIANT ARG-48</scope>
</reference>
<reference key="5">
    <citation type="journal article" date="1986" name="Proc. Natl. Acad. Sci. U.S.A.">
        <title>Three human alcohol dehydrogenase subunits: cDNA structure and molecular and evolutionary divergence.</title>
        <authorList>
            <person name="Ikuta T."/>
            <person name="Szeto S."/>
            <person name="Yoshida A."/>
        </authorList>
    </citation>
    <scope>NUCLEOTIDE SEQUENCE [MRNA] (ISOFORM 1)</scope>
</reference>
<reference key="6">
    <citation type="journal article" date="1987" name="Jpn. J. Genet.">
        <title>Molecular characterization of cDNA clones encoding the human alcohol dehydrogenase beta 1 and the evolutionary relationship to the other class I subunits alpha and gamma.</title>
        <authorList>
            <person name="Yokoyama S."/>
            <person name="Yokoyama R."/>
            <person name="Rotwein P."/>
        </authorList>
    </citation>
    <scope>NUCLEOTIDE SEQUENCE [MRNA] (ISOFORM 1)</scope>
    <scope>VARIANT ARG-48</scope>
</reference>
<reference key="7">
    <citation type="journal article" date="1989" name="Alcohol. Clin. Exp. Res.">
        <title>Nucleotide sequence of the ADH2(3) gene encoding the human alcohol dehydrogenase beta 3 subunit.</title>
        <authorList>
            <person name="Carr L.G."/>
            <person name="Xu Y."/>
            <person name="Ho W.H."/>
            <person name="Edenberg H.J."/>
        </authorList>
    </citation>
    <scope>NUCLEOTIDE SEQUENCE [GENOMIC DNA]</scope>
    <scope>VARIANTS LYS-57 AND CYS-370</scope>
    <scope>POLYMORPHISM</scope>
    <source>
        <tissue>Liver</tissue>
    </source>
</reference>
<reference key="8">
    <citation type="journal article" date="1989" name="Eur. J. Biochem.">
        <title>The genes for human alcohol dehydrogenases beta 1 and beta 2 differ by only one nucleotide.</title>
        <authorList>
            <person name="Matsuo Y."/>
            <person name="Yokoyama R."/>
            <person name="Yokoyama S."/>
        </authorList>
    </citation>
    <scope>NUCLEOTIDE SEQUENCE [GENOMIC DNA]</scope>
    <scope>POLYMORPHISM</scope>
</reference>
<reference key="9">
    <citation type="submission" date="1999-05" db="EMBL/GenBank/DDBJ databases">
        <authorList>
            <person name="Polin L."/>
            <person name="Hey-Chi H."/>
        </authorList>
    </citation>
    <scope>NUCLEOTIDE SEQUENCE [MRNA] (ISOFORM 1)</scope>
    <source>
        <tissue>Liver</tissue>
    </source>
</reference>
<reference key="10">
    <citation type="submission" date="2005-04" db="EMBL/GenBank/DDBJ databases">
        <authorList>
            <consortium name="NIEHS SNPs program"/>
        </authorList>
    </citation>
    <scope>NUCLEOTIDE SEQUENCE [GENOMIC DNA]</scope>
    <scope>VARIANTS ARG-48; SER-60 AND CYS-370</scope>
</reference>
<reference key="11">
    <citation type="journal article" date="2004" name="Nat. Genet.">
        <title>Complete sequencing and characterization of 21,243 full-length human cDNAs.</title>
        <authorList>
            <person name="Ota T."/>
            <person name="Suzuki Y."/>
            <person name="Nishikawa T."/>
            <person name="Otsuki T."/>
            <person name="Sugiyama T."/>
            <person name="Irie R."/>
            <person name="Wakamatsu A."/>
            <person name="Hayashi K."/>
            <person name="Sato H."/>
            <person name="Nagai K."/>
            <person name="Kimura K."/>
            <person name="Makita H."/>
            <person name="Sekine M."/>
            <person name="Obayashi M."/>
            <person name="Nishi T."/>
            <person name="Shibahara T."/>
            <person name="Tanaka T."/>
            <person name="Ishii S."/>
            <person name="Yamamoto J."/>
            <person name="Saito K."/>
            <person name="Kawai Y."/>
            <person name="Isono Y."/>
            <person name="Nakamura Y."/>
            <person name="Nagahari K."/>
            <person name="Murakami K."/>
            <person name="Yasuda T."/>
            <person name="Iwayanagi T."/>
            <person name="Wagatsuma M."/>
            <person name="Shiratori A."/>
            <person name="Sudo H."/>
            <person name="Hosoiri T."/>
            <person name="Kaku Y."/>
            <person name="Kodaira H."/>
            <person name="Kondo H."/>
            <person name="Sugawara M."/>
            <person name="Takahashi M."/>
            <person name="Kanda K."/>
            <person name="Yokoi T."/>
            <person name="Furuya T."/>
            <person name="Kikkawa E."/>
            <person name="Omura Y."/>
            <person name="Abe K."/>
            <person name="Kamihara K."/>
            <person name="Katsuta N."/>
            <person name="Sato K."/>
            <person name="Tanikawa M."/>
            <person name="Yamazaki M."/>
            <person name="Ninomiya K."/>
            <person name="Ishibashi T."/>
            <person name="Yamashita H."/>
            <person name="Murakawa K."/>
            <person name="Fujimori K."/>
            <person name="Tanai H."/>
            <person name="Kimata M."/>
            <person name="Watanabe M."/>
            <person name="Hiraoka S."/>
            <person name="Chiba Y."/>
            <person name="Ishida S."/>
            <person name="Ono Y."/>
            <person name="Takiguchi S."/>
            <person name="Watanabe S."/>
            <person name="Yosida M."/>
            <person name="Hotuta T."/>
            <person name="Kusano J."/>
            <person name="Kanehori K."/>
            <person name="Takahashi-Fujii A."/>
            <person name="Hara H."/>
            <person name="Tanase T.-O."/>
            <person name="Nomura Y."/>
            <person name="Togiya S."/>
            <person name="Komai F."/>
            <person name="Hara R."/>
            <person name="Takeuchi K."/>
            <person name="Arita M."/>
            <person name="Imose N."/>
            <person name="Musashino K."/>
            <person name="Yuuki H."/>
            <person name="Oshima A."/>
            <person name="Sasaki N."/>
            <person name="Aotsuka S."/>
            <person name="Yoshikawa Y."/>
            <person name="Matsunawa H."/>
            <person name="Ichihara T."/>
            <person name="Shiohata N."/>
            <person name="Sano S."/>
            <person name="Moriya S."/>
            <person name="Momiyama H."/>
            <person name="Satoh N."/>
            <person name="Takami S."/>
            <person name="Terashima Y."/>
            <person name="Suzuki O."/>
            <person name="Nakagawa S."/>
            <person name="Senoh A."/>
            <person name="Mizoguchi H."/>
            <person name="Goto Y."/>
            <person name="Shimizu F."/>
            <person name="Wakebe H."/>
            <person name="Hishigaki H."/>
            <person name="Watanabe T."/>
            <person name="Sugiyama A."/>
            <person name="Takemoto M."/>
            <person name="Kawakami B."/>
            <person name="Yamazaki M."/>
            <person name="Watanabe K."/>
            <person name="Kumagai A."/>
            <person name="Itakura S."/>
            <person name="Fukuzumi Y."/>
            <person name="Fujimori Y."/>
            <person name="Komiyama M."/>
            <person name="Tashiro H."/>
            <person name="Tanigami A."/>
            <person name="Fujiwara T."/>
            <person name="Ono T."/>
            <person name="Yamada K."/>
            <person name="Fujii Y."/>
            <person name="Ozaki K."/>
            <person name="Hirao M."/>
            <person name="Ohmori Y."/>
            <person name="Kawabata A."/>
            <person name="Hikiji T."/>
            <person name="Kobatake N."/>
            <person name="Inagaki H."/>
            <person name="Ikema Y."/>
            <person name="Okamoto S."/>
            <person name="Okitani R."/>
            <person name="Kawakami T."/>
            <person name="Noguchi S."/>
            <person name="Itoh T."/>
            <person name="Shigeta K."/>
            <person name="Senba T."/>
            <person name="Matsumura K."/>
            <person name="Nakajima Y."/>
            <person name="Mizuno T."/>
            <person name="Morinaga M."/>
            <person name="Sasaki M."/>
            <person name="Togashi T."/>
            <person name="Oyama M."/>
            <person name="Hata H."/>
            <person name="Watanabe M."/>
            <person name="Komatsu T."/>
            <person name="Mizushima-Sugano J."/>
            <person name="Satoh T."/>
            <person name="Shirai Y."/>
            <person name="Takahashi Y."/>
            <person name="Nakagawa K."/>
            <person name="Okumura K."/>
            <person name="Nagase T."/>
            <person name="Nomura N."/>
            <person name="Kikuchi H."/>
            <person name="Masuho Y."/>
            <person name="Yamashita R."/>
            <person name="Nakai K."/>
            <person name="Yada T."/>
            <person name="Nakamura Y."/>
            <person name="Ohara O."/>
            <person name="Isogai T."/>
            <person name="Sugano S."/>
        </authorList>
    </citation>
    <scope>NUCLEOTIDE SEQUENCE [LARGE SCALE MRNA] (ISOFORM 2)</scope>
    <scope>VARIANT ARG-48</scope>
    <source>
        <tissue>Small intestine</tissue>
    </source>
</reference>
<reference key="12">
    <citation type="journal article" date="2005" name="Nature">
        <title>Generation and annotation of the DNA sequences of human chromosomes 2 and 4.</title>
        <authorList>
            <person name="Hillier L.W."/>
            <person name="Graves T.A."/>
            <person name="Fulton R.S."/>
            <person name="Fulton L.A."/>
            <person name="Pepin K.H."/>
            <person name="Minx P."/>
            <person name="Wagner-McPherson C."/>
            <person name="Layman D."/>
            <person name="Wylie K."/>
            <person name="Sekhon M."/>
            <person name="Becker M.C."/>
            <person name="Fewell G.A."/>
            <person name="Delehaunty K.D."/>
            <person name="Miner T.L."/>
            <person name="Nash W.E."/>
            <person name="Kremitzki C."/>
            <person name="Oddy L."/>
            <person name="Du H."/>
            <person name="Sun H."/>
            <person name="Bradshaw-Cordum H."/>
            <person name="Ali J."/>
            <person name="Carter J."/>
            <person name="Cordes M."/>
            <person name="Harris A."/>
            <person name="Isak A."/>
            <person name="van Brunt A."/>
            <person name="Nguyen C."/>
            <person name="Du F."/>
            <person name="Courtney L."/>
            <person name="Kalicki J."/>
            <person name="Ozersky P."/>
            <person name="Abbott S."/>
            <person name="Armstrong J."/>
            <person name="Belter E.A."/>
            <person name="Caruso L."/>
            <person name="Cedroni M."/>
            <person name="Cotton M."/>
            <person name="Davidson T."/>
            <person name="Desai A."/>
            <person name="Elliott G."/>
            <person name="Erb T."/>
            <person name="Fronick C."/>
            <person name="Gaige T."/>
            <person name="Haakenson W."/>
            <person name="Haglund K."/>
            <person name="Holmes A."/>
            <person name="Harkins R."/>
            <person name="Kim K."/>
            <person name="Kruchowski S.S."/>
            <person name="Strong C.M."/>
            <person name="Grewal N."/>
            <person name="Goyea E."/>
            <person name="Hou S."/>
            <person name="Levy A."/>
            <person name="Martinka S."/>
            <person name="Mead K."/>
            <person name="McLellan M.D."/>
            <person name="Meyer R."/>
            <person name="Randall-Maher J."/>
            <person name="Tomlinson C."/>
            <person name="Dauphin-Kohlberg S."/>
            <person name="Kozlowicz-Reilly A."/>
            <person name="Shah N."/>
            <person name="Swearengen-Shahid S."/>
            <person name="Snider J."/>
            <person name="Strong J.T."/>
            <person name="Thompson J."/>
            <person name="Yoakum M."/>
            <person name="Leonard S."/>
            <person name="Pearman C."/>
            <person name="Trani L."/>
            <person name="Radionenko M."/>
            <person name="Waligorski J.E."/>
            <person name="Wang C."/>
            <person name="Rock S.M."/>
            <person name="Tin-Wollam A.-M."/>
            <person name="Maupin R."/>
            <person name="Latreille P."/>
            <person name="Wendl M.C."/>
            <person name="Yang S.-P."/>
            <person name="Pohl C."/>
            <person name="Wallis J.W."/>
            <person name="Spieth J."/>
            <person name="Bieri T.A."/>
            <person name="Berkowicz N."/>
            <person name="Nelson J.O."/>
            <person name="Osborne J."/>
            <person name="Ding L."/>
            <person name="Meyer R."/>
            <person name="Sabo A."/>
            <person name="Shotland Y."/>
            <person name="Sinha P."/>
            <person name="Wohldmann P.E."/>
            <person name="Cook L.L."/>
            <person name="Hickenbotham M.T."/>
            <person name="Eldred J."/>
            <person name="Williams D."/>
            <person name="Jones T.A."/>
            <person name="She X."/>
            <person name="Ciccarelli F.D."/>
            <person name="Izaurralde E."/>
            <person name="Taylor J."/>
            <person name="Schmutz J."/>
            <person name="Myers R.M."/>
            <person name="Cox D.R."/>
            <person name="Huang X."/>
            <person name="McPherson J.D."/>
            <person name="Mardis E.R."/>
            <person name="Clifton S.W."/>
            <person name="Warren W.C."/>
            <person name="Chinwalla A.T."/>
            <person name="Eddy S.R."/>
            <person name="Marra M.A."/>
            <person name="Ovcharenko I."/>
            <person name="Furey T.S."/>
            <person name="Miller W."/>
            <person name="Eichler E.E."/>
            <person name="Bork P."/>
            <person name="Suyama M."/>
            <person name="Torrents D."/>
            <person name="Waterston R.H."/>
            <person name="Wilson R.K."/>
        </authorList>
    </citation>
    <scope>NUCLEOTIDE SEQUENCE [LARGE SCALE GENOMIC DNA]</scope>
</reference>
<reference key="13">
    <citation type="journal article" date="2004" name="Genome Res.">
        <title>The status, quality, and expansion of the NIH full-length cDNA project: the Mammalian Gene Collection (MGC).</title>
        <authorList>
            <consortium name="The MGC Project Team"/>
        </authorList>
    </citation>
    <scope>NUCLEOTIDE SEQUENCE [LARGE SCALE MRNA] (ISOFORM 1)</scope>
    <scope>VARIANT ARG-48</scope>
    <source>
        <tissue>Testis</tissue>
    </source>
</reference>
<reference key="14">
    <citation type="journal article" date="1984" name="Eur. J. Biochem.">
        <title>Human liver alcohol dehydrogenase. 1. The primary structure of the beta 1 beta 1 isoenzyme.</title>
        <authorList>
            <person name="Hempel J."/>
            <person name="Buhler R."/>
            <person name="Kaiser R."/>
            <person name="Holmquist B."/>
            <person name="de Zalenski C."/>
            <person name="von Wartburg J.-P."/>
            <person name="Vallee B.L."/>
            <person name="Joernvall H."/>
        </authorList>
    </citation>
    <scope>PROTEIN SEQUENCE OF 2-375</scope>
    <scope>CLEAVAGE OF INITIATOR METHIONINE</scope>
    <scope>ACETYLATION AT SER-2</scope>
</reference>
<reference key="15">
    <citation type="journal article" date="1988" name="Genomics">
        <title>Genotyping of human alcohol dehydrogenases at the ADH2 and ADH3 loci following DNA sequence amplification.</title>
        <authorList>
            <person name="Xu Y.L."/>
            <person name="Carr L.G."/>
            <person name="Bosron W.F."/>
            <person name="Li T.K."/>
            <person name="Edenberg H.J."/>
        </authorList>
    </citation>
    <scope>PARTIAL NUCLEOTIDE SEQUENCE [MRNA]</scope>
    <scope>VARIANT LYS-57</scope>
</reference>
<reference key="16">
    <citation type="submission" date="1998-01" db="EMBL/GenBank/DDBJ databases">
        <authorList>
            <person name="Osier M."/>
            <person name="Speed W.C."/>
            <person name="Seaman M.I."/>
            <person name="Kidd K.K."/>
        </authorList>
    </citation>
    <scope>NUCLEOTIDE SEQUENCE [GENOMIC DNA] OF 41-86</scope>
    <scope>VARIANT ARG-48</scope>
</reference>
<reference key="17">
    <citation type="journal article" date="2004" name="Arch. Biochem. Biophys.">
        <title>Kinetics of human alcohol dehydrogenase with ring-oxidized retinoids: effect of Tween 80.</title>
        <authorList>
            <person name="Martras S."/>
            <person name="Alvarez R."/>
            <person name="Gallego O."/>
            <person name="Dominguez M."/>
            <person name="de Lera A.R."/>
            <person name="Farres J."/>
            <person name="Pares X."/>
        </authorList>
    </citation>
    <scope>CATALYTIC ACTIVITY</scope>
    <scope>FUNCTION</scope>
    <scope>BIOPHYSICOCHEMICAL PROPERTIES</scope>
</reference>
<reference key="18">
    <citation type="journal article" date="2006" name="Biochem. J.">
        <title>Comparative functional analysis of human medium-chain dehydrogenases, short-chain dehydrogenases/reductases and aldo-keto reductases with retinoids.</title>
        <authorList>
            <person name="Gallego O."/>
            <person name="Belyaeva O.V."/>
            <person name="Porte S."/>
            <person name="Ruiz F.X."/>
            <person name="Stetsenko A.V."/>
            <person name="Shabrova E.V."/>
            <person name="Kostereva N.V."/>
            <person name="Farres J."/>
            <person name="Pares X."/>
            <person name="Kedishvili N.Y."/>
        </authorList>
    </citation>
    <scope>CATALYTIC ACTIVITY</scope>
    <scope>FUNCTION</scope>
    <scope>BIOPHYSICOCHEMICAL PROPERTIES</scope>
</reference>
<reference key="19">
    <citation type="journal article" date="2014" name="J. Proteomics">
        <title>An enzyme assisted RP-RPLC approach for in-depth analysis of human liver phosphoproteome.</title>
        <authorList>
            <person name="Bian Y."/>
            <person name="Song C."/>
            <person name="Cheng K."/>
            <person name="Dong M."/>
            <person name="Wang F."/>
            <person name="Huang J."/>
            <person name="Sun D."/>
            <person name="Wang L."/>
            <person name="Ye M."/>
            <person name="Zou H."/>
        </authorList>
    </citation>
    <scope>PHOSPHORYLATION [LARGE SCALE ANALYSIS] AT SER-23 AND TYR-35</scope>
    <scope>IDENTIFICATION BY MASS SPECTROMETRY [LARGE SCALE ANALYSIS]</scope>
    <source>
        <tissue>Liver</tissue>
    </source>
</reference>
<reference key="20">
    <citation type="journal article" date="1984" name="Proc. Natl. Acad. Sci. U.S.A.">
        <title>Human liver alcohol dehydrogenase: amino acid substitution in the beta 2 beta 2 Oriental isozyme explains functional properties, establishes an active site structure, and parallels mutational exchanges in the yeast enzyme.</title>
        <authorList>
            <person name="Joernvall H."/>
            <person name="Hempel J."/>
            <person name="Vallee B.L."/>
            <person name="Bosron W.F."/>
            <person name="Li T.-K."/>
        </authorList>
    </citation>
    <scope>VARIANT ARG-48</scope>
    <scope>POLYMORPHISM</scope>
</reference>
<reference key="21">
    <citation type="journal article" date="1987" name="Biochem. Biophys. Res. Commun.">
        <title>The human beta 3 alcohol dehydrogenase subunit differs from beta 1 by a Cys for Arg-369 substitution which decreases NAD(H) binding.</title>
        <authorList>
            <person name="Burnell J.C."/>
            <person name="Carr L.G."/>
            <person name="Dwulet F.E."/>
            <person name="Edenberg H.J."/>
            <person name="Li T.-K."/>
            <person name="Bosron W.F."/>
        </authorList>
    </citation>
    <scope>VARIANT CYS-370</scope>
    <scope>POLYMORPHISM</scope>
</reference>
<reference key="22">
    <citation type="journal article" date="1991" name="Proc. Natl. Acad. Sci. U.S.A.">
        <title>Structure of human beta 1 beta 1 alcohol dehydrogenase: catalytic effects of non-active-site substitutions.</title>
        <authorList>
            <person name="Hurley T.D."/>
            <person name="Bosron W.F."/>
            <person name="Hamilton J.A."/>
            <person name="Amzel L.M."/>
        </authorList>
    </citation>
    <scope>X-RAY CRYSTALLOGRAPHY (3.0 ANGSTROMS)</scope>
</reference>
<reference key="23">
    <citation type="journal article" date="1994" name="J. Mol. Biol.">
        <title>Structures of three human beta alcohol dehydrogenase variants. Correlations with their functional differences.</title>
        <authorList>
            <person name="Hurley T.D."/>
            <person name="Bosron W.F."/>
            <person name="Stone C.L."/>
            <person name="Amzel L.M."/>
        </authorList>
    </citation>
    <scope>X-RAY CRYSTALLOGRAPHY (2.45 ANGSTROMS)</scope>
</reference>
<reference key="24">
    <citation type="journal article" date="1996" name="J. Biol. Chem.">
        <title>X-ray structure of human beta3beta3 alcohol dehydrogenase. The contribution of ionic interactions to coenzyme binding.</title>
        <authorList>
            <person name="Davis G.J."/>
            <person name="Bosron W.F."/>
            <person name="Stone C.L."/>
            <person name="Owusu-Dekyi K."/>
            <person name="Hurley T.D."/>
        </authorList>
    </citation>
    <scope>X-RAY CRYSTALLOGRAPHY (2.4 ANGSTROMS)</scope>
</reference>
<reference key="25">
    <citation type="journal article" date="2001" name="Protein Sci.">
        <title>Three-dimensional structures of the three human class I alcohol dehydrogenases.</title>
        <authorList>
            <person name="Niederhut M.S."/>
            <person name="Gibbons B.J."/>
            <person name="Perez-Miller S."/>
            <person name="Hurley T.D."/>
        </authorList>
    </citation>
    <scope>X-RAY CRYSTALLOGRAPHY (2.2 ANGSTROMS)</scope>
</reference>
<reference key="26">
    <citation type="journal article" date="2000" name="Hepatology">
        <title>Genetic polymorphism of alcohol dehydrogenase in Europeans: the ADH2*2 allele decreases the risk for alcoholism and is associated with ADH3*1.</title>
        <authorList>
            <person name="Borras E."/>
            <person name="Coutelle C."/>
            <person name="Rosell A."/>
            <person name="Fernandez-Muixi F."/>
            <person name="Broch M."/>
            <person name="Crosas B."/>
            <person name="Hjelmqvist L."/>
            <person name="Lorenzo A."/>
            <person name="Gutierrez C."/>
            <person name="Santos M."/>
            <person name="Szczepanek M."/>
            <person name="Heilig M."/>
            <person name="Quattrocchi P."/>
            <person name="Farres J."/>
            <person name="Vidal F."/>
            <person name="Richart C."/>
            <person name="Mach T."/>
            <person name="Bogdal J."/>
            <person name="Joernvall H."/>
            <person name="Seitz H.K."/>
            <person name="Couzigou P."/>
            <person name="Pares X."/>
        </authorList>
    </citation>
    <scope>POLYMORPHISM</scope>
</reference>
<proteinExistence type="evidence at protein level"/>
<organism>
    <name type="scientific">Homo sapiens</name>
    <name type="common">Human</name>
    <dbReference type="NCBI Taxonomy" id="9606"/>
    <lineage>
        <taxon>Eukaryota</taxon>
        <taxon>Metazoa</taxon>
        <taxon>Chordata</taxon>
        <taxon>Craniata</taxon>
        <taxon>Vertebrata</taxon>
        <taxon>Euteleostomi</taxon>
        <taxon>Mammalia</taxon>
        <taxon>Eutheria</taxon>
        <taxon>Euarchontoglires</taxon>
        <taxon>Primates</taxon>
        <taxon>Haplorrhini</taxon>
        <taxon>Catarrhini</taxon>
        <taxon>Hominidae</taxon>
        <taxon>Homo</taxon>
    </lineage>
</organism>
<accession>P00325</accession>
<accession>A8MYN5</accession>
<accession>B4DRS9</accession>
<accession>B4DVC3</accession>
<accession>Q13711</accession>
<accession>Q4ZGI9</accession>
<accession>Q96KI7</accession>
<feature type="initiator methionine" description="Removed" evidence="14">
    <location>
        <position position="1"/>
    </location>
</feature>
<feature type="chain" id="PRO_0000160661" description="All-trans-retinol dehydrogenase [NAD(+)] ADH1B">
    <location>
        <begin position="2"/>
        <end position="375"/>
    </location>
</feature>
<feature type="binding site">
    <location>
        <position position="47"/>
    </location>
    <ligand>
        <name>Zn(2+)</name>
        <dbReference type="ChEBI" id="CHEBI:29105"/>
        <label>1</label>
        <note>catalytic</note>
    </ligand>
</feature>
<feature type="binding site">
    <location>
        <position position="68"/>
    </location>
    <ligand>
        <name>Zn(2+)</name>
        <dbReference type="ChEBI" id="CHEBI:29105"/>
        <label>1</label>
        <note>catalytic</note>
    </ligand>
</feature>
<feature type="binding site">
    <location>
        <position position="98"/>
    </location>
    <ligand>
        <name>Zn(2+)</name>
        <dbReference type="ChEBI" id="CHEBI:29105"/>
        <label>2</label>
    </ligand>
</feature>
<feature type="binding site">
    <location>
        <position position="101"/>
    </location>
    <ligand>
        <name>Zn(2+)</name>
        <dbReference type="ChEBI" id="CHEBI:29105"/>
        <label>2</label>
    </ligand>
</feature>
<feature type="binding site">
    <location>
        <position position="104"/>
    </location>
    <ligand>
        <name>Zn(2+)</name>
        <dbReference type="ChEBI" id="CHEBI:29105"/>
        <label>2</label>
    </ligand>
</feature>
<feature type="binding site">
    <location>
        <position position="112"/>
    </location>
    <ligand>
        <name>Zn(2+)</name>
        <dbReference type="ChEBI" id="CHEBI:29105"/>
        <label>2</label>
    </ligand>
</feature>
<feature type="binding site">
    <location>
        <position position="175"/>
    </location>
    <ligand>
        <name>Zn(2+)</name>
        <dbReference type="ChEBI" id="CHEBI:29105"/>
        <label>1</label>
        <note>catalytic</note>
    </ligand>
</feature>
<feature type="binding site">
    <location>
        <begin position="200"/>
        <end position="205"/>
    </location>
    <ligand>
        <name>NAD(+)</name>
        <dbReference type="ChEBI" id="CHEBI:57540"/>
    </ligand>
</feature>
<feature type="binding site">
    <location>
        <position position="224"/>
    </location>
    <ligand>
        <name>NAD(+)</name>
        <dbReference type="ChEBI" id="CHEBI:57540"/>
    </ligand>
</feature>
<feature type="binding site">
    <location>
        <position position="229"/>
    </location>
    <ligand>
        <name>NAD(+)</name>
        <dbReference type="ChEBI" id="CHEBI:57540"/>
    </ligand>
</feature>
<feature type="binding site">
    <location>
        <begin position="293"/>
        <end position="295"/>
    </location>
    <ligand>
        <name>NAD(+)</name>
        <dbReference type="ChEBI" id="CHEBI:57540"/>
    </ligand>
</feature>
<feature type="binding site">
    <location>
        <position position="370"/>
    </location>
    <ligand>
        <name>NAD(+)</name>
        <dbReference type="ChEBI" id="CHEBI:57540"/>
    </ligand>
</feature>
<feature type="modified residue" description="N-acetylserine" evidence="14">
    <location>
        <position position="2"/>
    </location>
</feature>
<feature type="modified residue" description="Phosphoserine" evidence="23">
    <location>
        <position position="23"/>
    </location>
</feature>
<feature type="modified residue" description="Phosphotyrosine" evidence="23">
    <location>
        <position position="35"/>
    </location>
</feature>
<feature type="splice variant" id="VSP_054847" description="In isoform 2." evidence="18">
    <location>
        <begin position="1"/>
        <end position="40"/>
    </location>
</feature>
<feature type="sequence variant" id="VAR_000426" description="In dbSNP:rs1229984." evidence="2 4 8 9 10 15 16 17">
    <original>H</original>
    <variation>R</variation>
    <location>
        <position position="48"/>
    </location>
</feature>
<feature type="sequence variant" id="VAR_019322" description="In dbSNP:rs1041969." evidence="7 11">
    <original>N</original>
    <variation>K</variation>
    <location>
        <position position="57"/>
    </location>
</feature>
<feature type="sequence variant" id="VAR_019323" description="In dbSNP:rs6413413." evidence="15">
    <original>T</original>
    <variation>S</variation>
    <location>
        <position position="60"/>
    </location>
</feature>
<feature type="sequence variant" id="VAR_000427" description="In beta-3/Indianapolis; allele ADH1B*3; decreased NAD(H) binding; dbSNP:rs2066702." evidence="7 12 15">
    <original>R</original>
    <variation>C</variation>
    <location>
        <position position="370"/>
    </location>
</feature>
<feature type="sequence conflict" description="In Ref. 15; AAA51592." evidence="19" ref="15">
    <original>I</original>
    <variation>M</variation>
    <location>
        <position position="8"/>
    </location>
</feature>
<feature type="sequence conflict" description="In Ref. 14; AA sequence." evidence="19" ref="14">
    <location>
        <position position="130"/>
    </location>
</feature>
<feature type="sequence conflict" description="In Ref. 15; AAA51592." evidence="19" ref="15">
    <original>P</original>
    <variation>K</variation>
    <location>
        <position position="166"/>
    </location>
</feature>
<feature type="sequence conflict" description="In Ref. 8; CAA33487." evidence="19" ref="8">
    <original>V</original>
    <variation>VV</variation>
    <location>
        <position position="190"/>
    </location>
</feature>
<feature type="sequence conflict" description="In Ref. 11; BAG62635." evidence="19" ref="11">
    <original>I</original>
    <variation>V</variation>
    <location>
        <position position="220"/>
    </location>
</feature>
<feature type="sequence conflict" description="In Ref. 1; AAA51884." evidence="19" ref="1">
    <original>F</original>
    <variation>K</variation>
    <location>
        <position position="230"/>
    </location>
</feature>
<feature type="sequence conflict" description="In Ref. 15; AAA51592." evidence="19" ref="15">
    <original>E</original>
    <variation>V</variation>
    <location>
        <position position="235"/>
    </location>
</feature>
<feature type="sequence conflict" description="In Ref. 11; BAG62635." evidence="19" ref="11">
    <location>
        <begin position="338"/>
        <end position="344"/>
    </location>
</feature>
<feature type="strand" evidence="25">
    <location>
        <begin position="8"/>
        <end position="15"/>
    </location>
</feature>
<feature type="strand" evidence="25">
    <location>
        <begin position="23"/>
        <end position="29"/>
    </location>
</feature>
<feature type="strand" evidence="25">
    <location>
        <begin position="36"/>
        <end position="45"/>
    </location>
</feature>
<feature type="helix" evidence="25">
    <location>
        <begin position="48"/>
        <end position="54"/>
    </location>
</feature>
<feature type="strand" evidence="24">
    <location>
        <begin position="56"/>
        <end position="58"/>
    </location>
</feature>
<feature type="strand" evidence="25">
    <location>
        <begin position="62"/>
        <end position="65"/>
    </location>
</feature>
<feature type="strand" evidence="25">
    <location>
        <begin position="69"/>
        <end position="77"/>
    </location>
</feature>
<feature type="strand" evidence="25">
    <location>
        <begin position="89"/>
        <end position="92"/>
    </location>
</feature>
<feature type="strand" evidence="25">
    <location>
        <begin position="99"/>
        <end position="101"/>
    </location>
</feature>
<feature type="helix" evidence="25">
    <location>
        <begin position="102"/>
        <end position="105"/>
    </location>
</feature>
<feature type="strand" evidence="25">
    <location>
        <begin position="116"/>
        <end position="119"/>
    </location>
</feature>
<feature type="strand" evidence="25">
    <location>
        <begin position="131"/>
        <end position="133"/>
    </location>
</feature>
<feature type="strand" evidence="25">
    <location>
        <begin position="136"/>
        <end position="139"/>
    </location>
</feature>
<feature type="turn" evidence="25">
    <location>
        <begin position="142"/>
        <end position="144"/>
    </location>
</feature>
<feature type="strand" evidence="25">
    <location>
        <begin position="147"/>
        <end position="154"/>
    </location>
</feature>
<feature type="helix" evidence="25">
    <location>
        <begin position="155"/>
        <end position="157"/>
    </location>
</feature>
<feature type="strand" evidence="25">
    <location>
        <begin position="158"/>
        <end position="160"/>
    </location>
</feature>
<feature type="helix" evidence="25">
    <location>
        <begin position="167"/>
        <end position="170"/>
    </location>
</feature>
<feature type="helix" evidence="25">
    <location>
        <begin position="171"/>
        <end position="174"/>
    </location>
</feature>
<feature type="helix" evidence="25">
    <location>
        <begin position="176"/>
        <end position="185"/>
    </location>
</feature>
<feature type="turn" evidence="25">
    <location>
        <begin position="186"/>
        <end position="188"/>
    </location>
</feature>
<feature type="strand" evidence="25">
    <location>
        <begin position="195"/>
        <end position="199"/>
    </location>
</feature>
<feature type="helix" evidence="25">
    <location>
        <begin position="203"/>
        <end position="214"/>
    </location>
</feature>
<feature type="strand" evidence="25">
    <location>
        <begin position="218"/>
        <end position="223"/>
    </location>
</feature>
<feature type="helix" evidence="25">
    <location>
        <begin position="227"/>
        <end position="229"/>
    </location>
</feature>
<feature type="helix" evidence="25">
    <location>
        <begin position="230"/>
        <end position="235"/>
    </location>
</feature>
<feature type="strand" evidence="25">
    <location>
        <begin position="239"/>
        <end position="242"/>
    </location>
</feature>
<feature type="helix" evidence="25">
    <location>
        <begin position="244"/>
        <end position="246"/>
    </location>
</feature>
<feature type="helix" evidence="25">
    <location>
        <begin position="251"/>
        <end position="258"/>
    </location>
</feature>
<feature type="turn" evidence="25">
    <location>
        <begin position="259"/>
        <end position="261"/>
    </location>
</feature>
<feature type="strand" evidence="25">
    <location>
        <begin position="262"/>
        <end position="268"/>
    </location>
</feature>
<feature type="helix" evidence="25">
    <location>
        <begin position="273"/>
        <end position="282"/>
    </location>
</feature>
<feature type="turn" evidence="25">
    <location>
        <begin position="285"/>
        <end position="287"/>
    </location>
</feature>
<feature type="strand" evidence="25">
    <location>
        <begin position="289"/>
        <end position="292"/>
    </location>
</feature>
<feature type="strand" evidence="25">
    <location>
        <begin position="302"/>
        <end position="304"/>
    </location>
</feature>
<feature type="helix" evidence="25">
    <location>
        <begin position="307"/>
        <end position="310"/>
    </location>
</feature>
<feature type="strand" evidence="25">
    <location>
        <begin position="314"/>
        <end position="317"/>
    </location>
</feature>
<feature type="helix" evidence="25">
    <location>
        <begin position="320"/>
        <end position="322"/>
    </location>
</feature>
<feature type="helix" evidence="25">
    <location>
        <begin position="325"/>
        <end position="337"/>
    </location>
</feature>
<feature type="helix" evidence="25">
    <location>
        <begin position="344"/>
        <end position="346"/>
    </location>
</feature>
<feature type="strand" evidence="25">
    <location>
        <begin position="347"/>
        <end position="352"/>
    </location>
</feature>
<feature type="helix" evidence="25">
    <location>
        <begin position="353"/>
        <end position="355"/>
    </location>
</feature>
<feature type="helix" evidence="25">
    <location>
        <begin position="356"/>
        <end position="364"/>
    </location>
</feature>
<feature type="strand" evidence="25">
    <location>
        <begin position="369"/>
        <end position="374"/>
    </location>
</feature>
<keyword id="KW-0002">3D-structure</keyword>
<keyword id="KW-0007">Acetylation</keyword>
<keyword id="KW-0025">Alternative splicing</keyword>
<keyword id="KW-0963">Cytoplasm</keyword>
<keyword id="KW-0903">Direct protein sequencing</keyword>
<keyword id="KW-0443">Lipid metabolism</keyword>
<keyword id="KW-0479">Metal-binding</keyword>
<keyword id="KW-0520">NAD</keyword>
<keyword id="KW-0560">Oxidoreductase</keyword>
<keyword id="KW-0597">Phosphoprotein</keyword>
<keyword id="KW-1267">Proteomics identification</keyword>
<keyword id="KW-1185">Reference proteome</keyword>
<keyword id="KW-0862">Zinc</keyword>
<comment type="function">
    <text evidence="3 5">Catalyzes the NAD-dependent oxidation of all-trans-retinol and its derivatives such as all-trans-4-hydroxyretinol and may participate in retinoid metabolism (PubMed:15369820, PubMed:16787387). In vitro can also catalyze the NADH-dependent reduction of all-trans-retinal and its derivatives such as all-trans-4-oxoretinal (PubMed:15369820, PubMed:16787387). Catalyzes in the oxidative direction with higher efficiency (PubMed:16787387). Has the same affinity for all-trans-4-hydroxyretinol and all-trans-4-oxoretinal (PubMed:15369820).</text>
</comment>
<comment type="catalytic activity">
    <reaction evidence="5">
        <text>all-trans-retinol + NAD(+) = all-trans-retinal + NADH + H(+)</text>
        <dbReference type="Rhea" id="RHEA:21284"/>
        <dbReference type="ChEBI" id="CHEBI:15378"/>
        <dbReference type="ChEBI" id="CHEBI:17336"/>
        <dbReference type="ChEBI" id="CHEBI:17898"/>
        <dbReference type="ChEBI" id="CHEBI:57540"/>
        <dbReference type="ChEBI" id="CHEBI:57945"/>
        <dbReference type="EC" id="1.1.1.105"/>
    </reaction>
    <physiologicalReaction direction="left-to-right" evidence="21">
        <dbReference type="Rhea" id="RHEA:21285"/>
    </physiologicalReaction>
</comment>
<comment type="catalytic activity">
    <reaction evidence="3">
        <text>all-trans-4-hydroxyretinol + NAD(+) = all-trans-4-hydroxyretinal + NADH + H(+)</text>
        <dbReference type="Rhea" id="RHEA:55936"/>
        <dbReference type="ChEBI" id="CHEBI:15378"/>
        <dbReference type="ChEBI" id="CHEBI:57540"/>
        <dbReference type="ChEBI" id="CHEBI:57945"/>
        <dbReference type="ChEBI" id="CHEBI:132259"/>
        <dbReference type="ChEBI" id="CHEBI:139346"/>
    </reaction>
    <physiologicalReaction direction="left-to-right" evidence="20">
        <dbReference type="Rhea" id="RHEA:55937"/>
    </physiologicalReaction>
</comment>
<comment type="catalytic activity">
    <reaction evidence="3">
        <text>all-trans-4-oxoretinol + NAD(+) = all-trans-4-oxoretinal + NADH + H(+)</text>
        <dbReference type="Rhea" id="RHEA:60632"/>
        <dbReference type="ChEBI" id="CHEBI:15378"/>
        <dbReference type="ChEBI" id="CHEBI:44597"/>
        <dbReference type="ChEBI" id="CHEBI:57540"/>
        <dbReference type="ChEBI" id="CHEBI:57945"/>
        <dbReference type="ChEBI" id="CHEBI:139347"/>
    </reaction>
</comment>
<comment type="cofactor">
    <cofactor>
        <name>Zn(2+)</name>
        <dbReference type="ChEBI" id="CHEBI:29105"/>
    </cofactor>
    <text>Binds 2 Zn(2+) ions per subunit.</text>
</comment>
<comment type="biophysicochemical properties">
    <kinetics>
        <KM evidence="3">4 uM for all-trans-4-hydroxyretinol (in allele ADH1B*1)</KM>
        <KM evidence="3">25 uM for all-trans-4-oxoretinal (in allele ADH1B*1)</KM>
        <KM evidence="3">11 uM for all-trans-4-hydroxyretinol (in allele ADH1B*2)</KM>
        <KM evidence="3">27 uM for all-trans-4-oxoretinal (in allele ADH1B*2)</KM>
        <KM evidence="3">24 uM for all-trans-3,4-didehydroretinol(in allele ADH1B*2)</KM>
        <KM evidence="3">25 uM for all-trans-3,4-didehydroretinal(in allele ADH1B*2)</KM>
        <KM evidence="5">0.4 uM for all-trans-retinaldehyde (in allele ADH1B*2)</KM>
        <KM evidence="5">0.3 uM for all-trans-retinol (in allele ADH1B*2)</KM>
    </kinetics>
</comment>
<comment type="subunit">
    <text>Dimer of identical or non-identical chains of three types; alpha, beta and gamma.</text>
</comment>
<comment type="interaction">
    <interactant intactId="EBI-2838677">
        <id>P00325</id>
    </interactant>
    <interactant intactId="EBI-21822364">
        <id>P00326</id>
        <label>ADH1C</label>
    </interactant>
    <organismsDiffer>false</organismsDiffer>
    <experiments>2</experiments>
</comment>
<comment type="subcellular location">
    <subcellularLocation>
        <location>Cytoplasm</location>
    </subcellularLocation>
</comment>
<comment type="alternative products">
    <event type="alternative splicing"/>
    <isoform>
        <id>P00325-1</id>
        <name>1</name>
        <sequence type="displayed"/>
    </isoform>
    <isoform>
        <id>P00325-2</id>
        <name>2</name>
        <sequence type="described" ref="VSP_054847"/>
    </isoform>
</comment>
<comment type="polymorphism">
    <text evidence="1 6 7 12 13">Three alleles are known: ADH1B*1 (ADH2*1) corresponding to variant beta-1, ADH1B*2 (ADH2*2) corresponding to variant beta-2, ADH1B*3 (ADH2*3) corresponding to variant beta-3. The sequence shown is that of allele ADH1B*2. The ADH1B*2 allele frequency in orientals is approximately 75%, whereas it is less than 5% in most Caucasian populations. The ADH1B*2 allele is associated with a lower risk of alcoholism. ADH1B variations have been associated with protection against alcohol dependence and alcohol-related aerodigestive tract cancer [MIM:103720].</text>
</comment>
<comment type="miscellaneous">
    <text>There are 7 different ADH's isozymes in human: three belongs to class-I: alpha, beta, and gamma, one to class-II: pi, one to class-III: chi, one to class-IV: ADH7 and one to class-V: ADH6.</text>
</comment>
<comment type="similarity">
    <text evidence="19">Belongs to the zinc-containing alcohol dehydrogenase family.</text>
</comment>
<name>ADH1B_HUMAN</name>